<accession>A1ABS6</accession>
<dbReference type="EC" id="3.5.3.23" evidence="1"/>
<dbReference type="EMBL" id="CP000468">
    <property type="protein sequence ID" value="ABJ01116.1"/>
    <property type="molecule type" value="Genomic_DNA"/>
</dbReference>
<dbReference type="RefSeq" id="WP_000994978.1">
    <property type="nucleotide sequence ID" value="NZ_CADILS010000002.1"/>
</dbReference>
<dbReference type="SMR" id="A1ABS6"/>
<dbReference type="KEGG" id="ecv:APECO1_814"/>
<dbReference type="HOGENOM" id="CLU_053835_0_0_6"/>
<dbReference type="UniPathway" id="UPA00185">
    <property type="reaction ID" value="UER00280"/>
</dbReference>
<dbReference type="Proteomes" id="UP000008216">
    <property type="component" value="Chromosome"/>
</dbReference>
<dbReference type="GO" id="GO:0009015">
    <property type="term" value="F:N-succinylarginine dihydrolase activity"/>
    <property type="evidence" value="ECO:0007669"/>
    <property type="project" value="UniProtKB-UniRule"/>
</dbReference>
<dbReference type="GO" id="GO:0019544">
    <property type="term" value="P:arginine catabolic process to glutamate"/>
    <property type="evidence" value="ECO:0007669"/>
    <property type="project" value="UniProtKB-UniRule"/>
</dbReference>
<dbReference type="GO" id="GO:0019545">
    <property type="term" value="P:arginine catabolic process to succinate"/>
    <property type="evidence" value="ECO:0007669"/>
    <property type="project" value="UniProtKB-UniRule"/>
</dbReference>
<dbReference type="FunFam" id="3.75.10.20:FF:000001">
    <property type="entry name" value="N-succinylarginine dihydrolase"/>
    <property type="match status" value="1"/>
</dbReference>
<dbReference type="Gene3D" id="3.75.10.20">
    <property type="entry name" value="Succinylarginine dihydrolase"/>
    <property type="match status" value="1"/>
</dbReference>
<dbReference type="HAMAP" id="MF_01172">
    <property type="entry name" value="AstB"/>
    <property type="match status" value="1"/>
</dbReference>
<dbReference type="InterPro" id="IPR037031">
    <property type="entry name" value="AstB_sf"/>
</dbReference>
<dbReference type="InterPro" id="IPR007079">
    <property type="entry name" value="SuccinylArg_d-Hdrlase_AstB"/>
</dbReference>
<dbReference type="NCBIfam" id="TIGR03241">
    <property type="entry name" value="arg_catab_astB"/>
    <property type="match status" value="1"/>
</dbReference>
<dbReference type="NCBIfam" id="NF009789">
    <property type="entry name" value="PRK13281.1"/>
    <property type="match status" value="1"/>
</dbReference>
<dbReference type="PANTHER" id="PTHR30420">
    <property type="entry name" value="N-SUCCINYLARGININE DIHYDROLASE"/>
    <property type="match status" value="1"/>
</dbReference>
<dbReference type="PANTHER" id="PTHR30420:SF2">
    <property type="entry name" value="N-SUCCINYLARGININE DIHYDROLASE"/>
    <property type="match status" value="1"/>
</dbReference>
<dbReference type="Pfam" id="PF04996">
    <property type="entry name" value="AstB"/>
    <property type="match status" value="1"/>
</dbReference>
<dbReference type="SUPFAM" id="SSF55909">
    <property type="entry name" value="Pentein"/>
    <property type="match status" value="1"/>
</dbReference>
<protein>
    <recommendedName>
        <fullName evidence="1">N-succinylarginine dihydrolase</fullName>
        <ecNumber evidence="1">3.5.3.23</ecNumber>
    </recommendedName>
</protein>
<organism>
    <name type="scientific">Escherichia coli O1:K1 / APEC</name>
    <dbReference type="NCBI Taxonomy" id="405955"/>
    <lineage>
        <taxon>Bacteria</taxon>
        <taxon>Pseudomonadati</taxon>
        <taxon>Pseudomonadota</taxon>
        <taxon>Gammaproteobacteria</taxon>
        <taxon>Enterobacterales</taxon>
        <taxon>Enterobacteriaceae</taxon>
        <taxon>Escherichia</taxon>
    </lineage>
</organism>
<name>ASTB_ECOK1</name>
<evidence type="ECO:0000255" key="1">
    <source>
        <dbReference type="HAMAP-Rule" id="MF_01172"/>
    </source>
</evidence>
<keyword id="KW-0056">Arginine metabolism</keyword>
<keyword id="KW-0378">Hydrolase</keyword>
<keyword id="KW-1185">Reference proteome</keyword>
<proteinExistence type="inferred from homology"/>
<reference key="1">
    <citation type="journal article" date="2007" name="J. Bacteriol.">
        <title>The genome sequence of avian pathogenic Escherichia coli strain O1:K1:H7 shares strong similarities with human extraintestinal pathogenic E. coli genomes.</title>
        <authorList>
            <person name="Johnson T.J."/>
            <person name="Kariyawasam S."/>
            <person name="Wannemuehler Y."/>
            <person name="Mangiamele P."/>
            <person name="Johnson S.J."/>
            <person name="Doetkott C."/>
            <person name="Skyberg J.A."/>
            <person name="Lynne A.M."/>
            <person name="Johnson J.R."/>
            <person name="Nolan L.K."/>
        </authorList>
    </citation>
    <scope>NUCLEOTIDE SEQUENCE [LARGE SCALE GENOMIC DNA]</scope>
</reference>
<sequence length="447" mass="49539">MNAWEVNFDGLVGLTHHYAGLSFGNEASTRHRFQVSNPRLAAKQGLLKMKKLADAGFPQAVIPPHERPFIPVLRQLGFRGSDEQVLEKVARQAPHWLSSVSSASPMWVANAATIAPSADTLDGKVHLTVANLNNKFHRSLEAPVTESLLKAIFNDEEKFSVHSALPQVALLGDEGAANHNRLGGHYGEPGMQLFVYGREEGNDTRPSRYPARQTREASEAVARLNQVNPQQVIFAQQNPDVIDQGVFHNDVIAVSNRQVLFCHQQAFARQSQLLANLRARVNGFMAIEVPATQVFVSDAVSTYLFNSQLLSRDDGSMVLVLPQECREHAGVWRYLNELLAADNPISELKVFDLRESMANGGGPACLRLRVVLTEEERRAVNPAVMMNDTLFNALNDWVDRYYRDRLTAADLADPQLLREGREALDTLTQLLDLGSVYPFQREGGGNG</sequence>
<gene>
    <name evidence="1" type="primary">astB</name>
    <name type="ordered locus">Ecok1_16220</name>
    <name type="ORF">APECO1_814</name>
</gene>
<feature type="chain" id="PRO_1000065725" description="N-succinylarginine dihydrolase">
    <location>
        <begin position="1"/>
        <end position="447"/>
    </location>
</feature>
<feature type="active site" evidence="1">
    <location>
        <position position="174"/>
    </location>
</feature>
<feature type="active site" evidence="1">
    <location>
        <position position="248"/>
    </location>
</feature>
<feature type="active site" description="Nucleophile" evidence="1">
    <location>
        <position position="365"/>
    </location>
</feature>
<feature type="binding site" evidence="1">
    <location>
        <begin position="19"/>
        <end position="28"/>
    </location>
    <ligand>
        <name>substrate</name>
    </ligand>
</feature>
<feature type="binding site" evidence="1">
    <location>
        <position position="110"/>
    </location>
    <ligand>
        <name>substrate</name>
    </ligand>
</feature>
<feature type="binding site" evidence="1">
    <location>
        <begin position="137"/>
        <end position="138"/>
    </location>
    <ligand>
        <name>substrate</name>
    </ligand>
</feature>
<feature type="binding site" evidence="1">
    <location>
        <position position="212"/>
    </location>
    <ligand>
        <name>substrate</name>
    </ligand>
</feature>
<feature type="binding site" evidence="1">
    <location>
        <position position="250"/>
    </location>
    <ligand>
        <name>substrate</name>
    </ligand>
</feature>
<feature type="binding site" evidence="1">
    <location>
        <position position="359"/>
    </location>
    <ligand>
        <name>substrate</name>
    </ligand>
</feature>
<comment type="function">
    <text evidence="1">Catalyzes the hydrolysis of N(2)-succinylarginine into N(2)-succinylornithine, ammonia and CO(2).</text>
</comment>
<comment type="catalytic activity">
    <reaction evidence="1">
        <text>N(2)-succinyl-L-arginine + 2 H2O + 2 H(+) = N(2)-succinyl-L-ornithine + 2 NH4(+) + CO2</text>
        <dbReference type="Rhea" id="RHEA:19533"/>
        <dbReference type="ChEBI" id="CHEBI:15377"/>
        <dbReference type="ChEBI" id="CHEBI:15378"/>
        <dbReference type="ChEBI" id="CHEBI:16526"/>
        <dbReference type="ChEBI" id="CHEBI:28938"/>
        <dbReference type="ChEBI" id="CHEBI:58241"/>
        <dbReference type="ChEBI" id="CHEBI:58514"/>
        <dbReference type="EC" id="3.5.3.23"/>
    </reaction>
</comment>
<comment type="pathway">
    <text evidence="1">Amino-acid degradation; L-arginine degradation via AST pathway; L-glutamate and succinate from L-arginine: step 2/5.</text>
</comment>
<comment type="subunit">
    <text evidence="1">Homodimer.</text>
</comment>
<comment type="similarity">
    <text evidence="1">Belongs to the succinylarginine dihydrolase family.</text>
</comment>